<comment type="function">
    <text evidence="7">May have a role in pharyngeal pumping during feeding.</text>
</comment>
<comment type="subunit">
    <text evidence="4">Heterodimer of 2 chains generated by proteolytic processing; the large extracellular N-terminal fragment and the membrane-bound C-terminal fragment predominantly remain associated and non-covalently linked.</text>
</comment>
<comment type="subcellular location">
    <subcellularLocation>
        <location evidence="1">Cell membrane</location>
        <topology evidence="1">Multi-pass membrane protein</topology>
    </subcellularLocation>
</comment>
<comment type="alternative products">
    <event type="alternative splicing"/>
    <isoform>
        <id>G5ECX0-1</id>
        <name evidence="9 10">a</name>
        <sequence type="displayed"/>
    </isoform>
    <isoform>
        <id>G5ECX0-2</id>
        <name evidence="9">b</name>
        <sequence type="described" ref="VSP_046486"/>
    </isoform>
</comment>
<comment type="tissue specificity">
    <text evidence="8">Pharyngeal primordium.</text>
</comment>
<comment type="PTM">
    <text evidence="4">Autoproteolytically processed at the GPS region of the GAIN-B domain; this cleavage modulates receptor activity.</text>
</comment>
<comment type="disruption phenotype">
    <text evidence="7">Reduced response to the inhibitory action of emodepside in pharyngeal pumping.</text>
</comment>
<comment type="similarity">
    <text evidence="1">Belongs to the G-protein coupled receptor 2 family. LN-TM7 subfamily.</text>
</comment>
<sequence length="1338" mass="147302">MAKQLKYPFLIFIISLAQCQVSNQNVNLCQSNICQNGGTCLVASSVPATATCPKNSIYYMGSCYVFDTTLRNWNDAALYCNNMNSATLPLVESAEDQAFFAGYLQAMIPSNPPADMRPPPDGIWTAVRGVNNVTRASWVYYPGSFLVTDTFWAPQEPNIYVNYNDVCVALQSDSFYREWTTALCTILKYTVCKVAPTQIQAKYVAQCSCPNGYGGQTCETQSTTNQQASTQRTCGSNDFQFSCPNDQTITVDFASFGAQESSMCNQASQSREQTCSNVNSLQTVINACQGLQSCEIRNLTSTFSNTPCPVPQEQYLETRMRCETAQQPSCLSGLIQFDSRCYSMTIETNEKKQRTMEDAQTYCSQSGGSIITSPPDALLQQIVQKVNAETKKTVNFWIGTPNNCQLLMVTGSSTSYSQCPSSPSSTANVICSTVPQSTASVSARPTQSAPVDPVSQTMARREVYTGVQPPSVPDSINKPRYCKKEKKDGITYEQTRACMLHEQPCPDPQNVEGTVTRYCNCQTAKWETPDTTNCTHRWVAEMETAIKDNQPVEDISSTVNRQLKSTIERTLFGGDITGTVRLSNDMLSLARNQFSVLNDRNLRENKARNFTENLGGSGDQLLSPVAATVWDQLSSTIRIQHASKLMSVLEQSVLLLGDYMTDQKLNLQYINWAMEVERSEPEVQTFGAAASPNVQDDMGMMRVMAAAPPAPQPETNTTIMFPSLKLSPTITLPSASLLSSLASPTPVAGGGPSILSSFQDDTPVGMASTPNLNRNPVKLGYYAFAGFGQLLNNNNDHTLINSQVIGASIQNATQSVTLPVDHPVTFTFQHLTTKGVSNPRCVYWDLMESKWSTLGCTLIATSSNSSQCSCTHLTSFAILMDISGQVGRLSGGLASALDVVSTIGCAISIVCLALSVCVFTFFRNLQNVRNSIHRNLCLCLLIAELVFVIGMDRTGNRTGCGVVAILLHYFFLSSFCWMLLEGYQLYMMLIQVFEPNRTRIFLYYLFCYGTPAVVVAISAGIKWEDYGTDSYCWIDTSTPTIWAFVAPIIVIIAANIIFLLIALKVVLSVQSRDRTKWGRIIGWLKGSATLLCLLGITWIFGFLTAVKGGTGTAFAWIFTILNCTQGIFIFVLHVVLNEKVRASIVRWLRTGICCLPETSSAAYNSRSFLSSRQRILNMIKVNGHSYPSTASTDDKEKQLTPITKTTDWLSRLPNQDSVSIPESNFNNLNGTLENSNLNSAEIKEEDEIPELRRRVTVDLNPMIVSNNEIERMSHASSDPRGSQIIEVTAVEKKAPVKRIKFPLGAKQSERGSQHRTKAKVIAPPESPVSESGSKDYRF</sequence>
<name>LPLT2_CAEEL</name>
<protein>
    <recommendedName>
        <fullName evidence="14 16">Latrophilin-like protein LAT-2</fullName>
    </recommendedName>
</protein>
<proteinExistence type="evidence at transcript level"/>
<evidence type="ECO:0000255" key="1"/>
<evidence type="ECO:0000255" key="2">
    <source>
        <dbReference type="PROSITE-ProRule" id="PRU00040"/>
    </source>
</evidence>
<evidence type="ECO:0000255" key="3">
    <source>
        <dbReference type="PROSITE-ProRule" id="PRU00076"/>
    </source>
</evidence>
<evidence type="ECO:0000255" key="4">
    <source>
        <dbReference type="PROSITE-ProRule" id="PRU00098"/>
    </source>
</evidence>
<evidence type="ECO:0000255" key="5">
    <source>
        <dbReference type="PROSITE-ProRule" id="PRU00260"/>
    </source>
</evidence>
<evidence type="ECO:0000256" key="6">
    <source>
        <dbReference type="SAM" id="MobiDB-lite"/>
    </source>
</evidence>
<evidence type="ECO:0000269" key="7">
    <source>
    </source>
</evidence>
<evidence type="ECO:0000269" key="8">
    <source>
    </source>
</evidence>
<evidence type="ECO:0000269" key="9">
    <source>
    </source>
</evidence>
<evidence type="ECO:0000269" key="10">
    <source ref="1"/>
</evidence>
<evidence type="ECO:0000303" key="11">
    <source>
    </source>
</evidence>
<evidence type="ECO:0000305" key="12"/>
<evidence type="ECO:0000312" key="13">
    <source>
        <dbReference type="EMBL" id="AAQ84879.1"/>
    </source>
</evidence>
<evidence type="ECO:0000312" key="14">
    <source>
        <dbReference type="EMBL" id="CCD61661.1"/>
    </source>
</evidence>
<evidence type="ECO:0000312" key="15">
    <source>
        <dbReference type="WormBase" id="B0286.2a"/>
    </source>
</evidence>
<evidence type="ECO:0000312" key="16">
    <source>
        <dbReference type="WormBase" id="B0286.2b"/>
    </source>
</evidence>
<accession>G5ECX0</accession>
<accession>B2MZA8</accession>
<organism>
    <name type="scientific">Caenorhabditis elegans</name>
    <dbReference type="NCBI Taxonomy" id="6239"/>
    <lineage>
        <taxon>Eukaryota</taxon>
        <taxon>Metazoa</taxon>
        <taxon>Ecdysozoa</taxon>
        <taxon>Nematoda</taxon>
        <taxon>Chromadorea</taxon>
        <taxon>Rhabditida</taxon>
        <taxon>Rhabditina</taxon>
        <taxon>Rhabditomorpha</taxon>
        <taxon>Rhabditoidea</taxon>
        <taxon>Rhabditidae</taxon>
        <taxon>Peloderinae</taxon>
        <taxon>Caenorhabditis</taxon>
    </lineage>
</organism>
<gene>
    <name evidence="14 15" type="primary">lat-2</name>
    <name type="ORF">B0286.2</name>
</gene>
<dbReference type="EMBL" id="AY314772">
    <property type="protein sequence ID" value="AAQ84879.1"/>
    <property type="molecule type" value="mRNA"/>
</dbReference>
<dbReference type="EMBL" id="FO080154">
    <property type="protein sequence ID" value="CCD61661.1"/>
    <property type="molecule type" value="Genomic_DNA"/>
</dbReference>
<dbReference type="EMBL" id="FO080154">
    <property type="protein sequence ID" value="CCD61662.1"/>
    <property type="molecule type" value="Genomic_DNA"/>
</dbReference>
<dbReference type="RefSeq" id="NP_001040724.1">
    <molecule id="G5ECX0-1"/>
    <property type="nucleotide sequence ID" value="NM_001047259.5"/>
</dbReference>
<dbReference type="RefSeq" id="NP_001040725.1">
    <molecule id="G5ECX0-2"/>
    <property type="nucleotide sequence ID" value="NM_001047260.3"/>
</dbReference>
<dbReference type="SMR" id="G5ECX0"/>
<dbReference type="BioGRID" id="39127">
    <property type="interactions" value="1"/>
</dbReference>
<dbReference type="STRING" id="6239.B0286.2a.1"/>
<dbReference type="MEROPS" id="S01.A54"/>
<dbReference type="TCDB" id="9.A.14.6.5">
    <property type="family name" value="the g-protein-coupled receptor (gpcr) family"/>
</dbReference>
<dbReference type="PaxDb" id="6239-B0286.2a"/>
<dbReference type="EnsemblMetazoa" id="B0286.2a.1">
    <molecule id="G5ECX0-1"/>
    <property type="protein sequence ID" value="B0286.2a.1"/>
    <property type="gene ID" value="WBGene00002252"/>
</dbReference>
<dbReference type="EnsemblMetazoa" id="B0286.2b.1">
    <molecule id="G5ECX0-2"/>
    <property type="protein sequence ID" value="B0286.2b.1"/>
    <property type="gene ID" value="WBGene00002252"/>
</dbReference>
<dbReference type="GeneID" id="173771"/>
<dbReference type="KEGG" id="cel:CELE_B0286.2"/>
<dbReference type="AGR" id="WB:WBGene00002252"/>
<dbReference type="CTD" id="173771"/>
<dbReference type="WormBase" id="B0286.2a">
    <molecule id="G5ECX0-1"/>
    <property type="protein sequence ID" value="CE36968"/>
    <property type="gene ID" value="WBGene00002252"/>
    <property type="gene designation" value="lat-2"/>
</dbReference>
<dbReference type="WormBase" id="B0286.2b">
    <molecule id="G5ECX0-2"/>
    <property type="protein sequence ID" value="CE39661"/>
    <property type="gene ID" value="WBGene00002252"/>
    <property type="gene designation" value="lat-2"/>
</dbReference>
<dbReference type="eggNOG" id="KOG4193">
    <property type="taxonomic scope" value="Eukaryota"/>
</dbReference>
<dbReference type="GeneTree" id="ENSGT00940000166745"/>
<dbReference type="HOGENOM" id="CLU_270428_0_0_1"/>
<dbReference type="InParanoid" id="G5ECX0"/>
<dbReference type="OMA" id="MCNQASQ"/>
<dbReference type="OrthoDB" id="1100386at2759"/>
<dbReference type="PhylomeDB" id="G5ECX0"/>
<dbReference type="PRO" id="PR:G5ECX0"/>
<dbReference type="Proteomes" id="UP000001940">
    <property type="component" value="Chromosome II"/>
</dbReference>
<dbReference type="Bgee" id="WBGene00002252">
    <property type="expression patterns" value="Expressed in pharyngeal muscle cell (C elegans) and 3 other cell types or tissues"/>
</dbReference>
<dbReference type="GO" id="GO:0005886">
    <property type="term" value="C:plasma membrane"/>
    <property type="evidence" value="ECO:0000318"/>
    <property type="project" value="GO_Central"/>
</dbReference>
<dbReference type="GO" id="GO:0030246">
    <property type="term" value="F:carbohydrate binding"/>
    <property type="evidence" value="ECO:0007669"/>
    <property type="project" value="UniProtKB-KW"/>
</dbReference>
<dbReference type="GO" id="GO:0004175">
    <property type="term" value="F:endopeptidase activity"/>
    <property type="evidence" value="ECO:0000314"/>
    <property type="project" value="WormBase"/>
</dbReference>
<dbReference type="GO" id="GO:0004930">
    <property type="term" value="F:G protein-coupled receptor activity"/>
    <property type="evidence" value="ECO:0007669"/>
    <property type="project" value="UniProtKB-KW"/>
</dbReference>
<dbReference type="GO" id="GO:0007166">
    <property type="term" value="P:cell surface receptor signaling pathway"/>
    <property type="evidence" value="ECO:0007669"/>
    <property type="project" value="InterPro"/>
</dbReference>
<dbReference type="GO" id="GO:0097264">
    <property type="term" value="P:self proteolysis"/>
    <property type="evidence" value="ECO:0000314"/>
    <property type="project" value="WormBase"/>
</dbReference>
<dbReference type="CDD" id="cd15440">
    <property type="entry name" value="7tmB2_latrophilin-like_invertebrate"/>
    <property type="match status" value="1"/>
</dbReference>
<dbReference type="CDD" id="cd00037">
    <property type="entry name" value="CLECT"/>
    <property type="match status" value="1"/>
</dbReference>
<dbReference type="CDD" id="cd22840">
    <property type="entry name" value="Gal_Rha_Lectin_LAT2"/>
    <property type="match status" value="1"/>
</dbReference>
<dbReference type="FunFam" id="1.20.1070.10:FF:000352">
    <property type="entry name" value="Latrophilin-like protein 1"/>
    <property type="match status" value="1"/>
</dbReference>
<dbReference type="FunFam" id="4.10.1240.10:FF:000057">
    <property type="entry name" value="Latrophilin-like protein LAT-2"/>
    <property type="match status" value="1"/>
</dbReference>
<dbReference type="Gene3D" id="2.60.120.740">
    <property type="match status" value="1"/>
</dbReference>
<dbReference type="Gene3D" id="2.60.220.50">
    <property type="match status" value="1"/>
</dbReference>
<dbReference type="Gene3D" id="4.10.1240.10">
    <property type="entry name" value="GPCR, family 2, extracellular hormone receptor domain"/>
    <property type="match status" value="1"/>
</dbReference>
<dbReference type="Gene3D" id="3.10.100.10">
    <property type="entry name" value="Mannose-Binding Protein A, subunit A"/>
    <property type="match status" value="2"/>
</dbReference>
<dbReference type="Gene3D" id="1.20.1070.10">
    <property type="entry name" value="Rhodopsin 7-helix transmembrane proteins"/>
    <property type="match status" value="1"/>
</dbReference>
<dbReference type="InterPro" id="IPR048072">
    <property type="entry name" value="7tmB2_latrophilin-like"/>
</dbReference>
<dbReference type="InterPro" id="IPR001304">
    <property type="entry name" value="C-type_lectin-like"/>
</dbReference>
<dbReference type="InterPro" id="IPR016186">
    <property type="entry name" value="C-type_lectin-like/link_sf"/>
</dbReference>
<dbReference type="InterPro" id="IPR016187">
    <property type="entry name" value="CTDL_fold"/>
</dbReference>
<dbReference type="InterPro" id="IPR000742">
    <property type="entry name" value="EGF-like_dom"/>
</dbReference>
<dbReference type="InterPro" id="IPR057244">
    <property type="entry name" value="GAIN_B"/>
</dbReference>
<dbReference type="InterPro" id="IPR032471">
    <property type="entry name" value="GAIN_dom_N"/>
</dbReference>
<dbReference type="InterPro" id="IPR046338">
    <property type="entry name" value="GAIN_dom_sf"/>
</dbReference>
<dbReference type="InterPro" id="IPR017981">
    <property type="entry name" value="GPCR_2-like_7TM"/>
</dbReference>
<dbReference type="InterPro" id="IPR036445">
    <property type="entry name" value="GPCR_2_extracell_dom_sf"/>
</dbReference>
<dbReference type="InterPro" id="IPR001879">
    <property type="entry name" value="GPCR_2_extracellular_dom"/>
</dbReference>
<dbReference type="InterPro" id="IPR000832">
    <property type="entry name" value="GPCR_2_secretin-like"/>
</dbReference>
<dbReference type="InterPro" id="IPR000203">
    <property type="entry name" value="GPS"/>
</dbReference>
<dbReference type="InterPro" id="IPR000922">
    <property type="entry name" value="Lectin_gal-bd_dom"/>
</dbReference>
<dbReference type="InterPro" id="IPR043159">
    <property type="entry name" value="Lectin_gal-bd_sf"/>
</dbReference>
<dbReference type="PANTHER" id="PTHR12011">
    <property type="entry name" value="ADHESION G-PROTEIN COUPLED RECEPTOR"/>
    <property type="match status" value="1"/>
</dbReference>
<dbReference type="PANTHER" id="PTHR12011:SF347">
    <property type="entry name" value="FI21270P1-RELATED"/>
    <property type="match status" value="1"/>
</dbReference>
<dbReference type="Pfam" id="PF00002">
    <property type="entry name" value="7tm_2"/>
    <property type="match status" value="1"/>
</dbReference>
<dbReference type="Pfam" id="PF16489">
    <property type="entry name" value="GAIN"/>
    <property type="match status" value="1"/>
</dbReference>
<dbReference type="Pfam" id="PF01825">
    <property type="entry name" value="GPS"/>
    <property type="match status" value="1"/>
</dbReference>
<dbReference type="Pfam" id="PF02140">
    <property type="entry name" value="SUEL_Lectin"/>
    <property type="match status" value="1"/>
</dbReference>
<dbReference type="PRINTS" id="PR00249">
    <property type="entry name" value="GPCRSECRETIN"/>
</dbReference>
<dbReference type="SMART" id="SM00034">
    <property type="entry name" value="CLECT"/>
    <property type="match status" value="2"/>
</dbReference>
<dbReference type="SMART" id="SM00303">
    <property type="entry name" value="GPS"/>
    <property type="match status" value="1"/>
</dbReference>
<dbReference type="SMART" id="SM00008">
    <property type="entry name" value="HormR"/>
    <property type="match status" value="1"/>
</dbReference>
<dbReference type="SUPFAM" id="SSF56436">
    <property type="entry name" value="C-type lectin-like"/>
    <property type="match status" value="2"/>
</dbReference>
<dbReference type="SUPFAM" id="SSF81321">
    <property type="entry name" value="Family A G protein-coupled receptor-like"/>
    <property type="match status" value="1"/>
</dbReference>
<dbReference type="PROSITE" id="PS50041">
    <property type="entry name" value="C_TYPE_LECTIN_2"/>
    <property type="match status" value="1"/>
</dbReference>
<dbReference type="PROSITE" id="PS00022">
    <property type="entry name" value="EGF_1"/>
    <property type="match status" value="1"/>
</dbReference>
<dbReference type="PROSITE" id="PS01186">
    <property type="entry name" value="EGF_2"/>
    <property type="match status" value="1"/>
</dbReference>
<dbReference type="PROSITE" id="PS50026">
    <property type="entry name" value="EGF_3"/>
    <property type="match status" value="2"/>
</dbReference>
<dbReference type="PROSITE" id="PS50227">
    <property type="entry name" value="G_PROTEIN_RECEP_F2_3"/>
    <property type="match status" value="1"/>
</dbReference>
<dbReference type="PROSITE" id="PS50261">
    <property type="entry name" value="G_PROTEIN_RECEP_F2_4"/>
    <property type="match status" value="1"/>
</dbReference>
<dbReference type="PROSITE" id="PS50221">
    <property type="entry name" value="GAIN_B"/>
    <property type="match status" value="1"/>
</dbReference>
<dbReference type="PROSITE" id="PS50228">
    <property type="entry name" value="SUEL_LECTIN"/>
    <property type="match status" value="1"/>
</dbReference>
<feature type="signal peptide" evidence="1">
    <location>
        <begin position="1"/>
        <end position="19"/>
    </location>
</feature>
<feature type="chain" id="PRO_0000422177" description="Latrophilin-like protein LAT-2" evidence="1">
    <location>
        <begin position="20"/>
        <end position="1338"/>
    </location>
</feature>
<feature type="topological domain" description="Extracellular" evidence="1">
    <location>
        <begin position="20"/>
        <end position="901"/>
    </location>
</feature>
<feature type="transmembrane region" description="Helical; Name=1" evidence="1">
    <location>
        <begin position="902"/>
        <end position="922"/>
    </location>
</feature>
<feature type="topological domain" description="Cytoplasmic" evidence="1">
    <location>
        <begin position="923"/>
        <end position="930"/>
    </location>
</feature>
<feature type="transmembrane region" description="Helical; Name=2" evidence="1">
    <location>
        <begin position="931"/>
        <end position="951"/>
    </location>
</feature>
<feature type="topological domain" description="Extracellular" evidence="1">
    <location>
        <begin position="952"/>
        <end position="959"/>
    </location>
</feature>
<feature type="transmembrane region" description="Helical; Name=3" evidence="1">
    <location>
        <begin position="960"/>
        <end position="980"/>
    </location>
</feature>
<feature type="topological domain" description="Cytoplasmic" evidence="1">
    <location>
        <begin position="981"/>
        <end position="999"/>
    </location>
</feature>
<feature type="transmembrane region" description="Helical; Name=4" evidence="1">
    <location>
        <begin position="1000"/>
        <end position="1020"/>
    </location>
</feature>
<feature type="topological domain" description="Extracellular" evidence="1">
    <location>
        <begin position="1021"/>
        <end position="1040"/>
    </location>
</feature>
<feature type="transmembrane region" description="Helical; Name=5" evidence="1">
    <location>
        <begin position="1041"/>
        <end position="1061"/>
    </location>
</feature>
<feature type="topological domain" description="Cytoplasmic" evidence="1">
    <location>
        <begin position="1062"/>
        <end position="1085"/>
    </location>
</feature>
<feature type="transmembrane region" description="Helical; Name=6" evidence="1">
    <location>
        <begin position="1086"/>
        <end position="1106"/>
    </location>
</feature>
<feature type="topological domain" description="Extracellular" evidence="1">
    <location>
        <begin position="1107"/>
        <end position="1115"/>
    </location>
</feature>
<feature type="transmembrane region" description="Helical; Name=7" evidence="1">
    <location>
        <begin position="1116"/>
        <end position="1136"/>
    </location>
</feature>
<feature type="topological domain" description="Cytoplasmic" evidence="1">
    <location>
        <begin position="1137"/>
        <end position="1338"/>
    </location>
</feature>
<feature type="domain" description="EGF-like 1" evidence="3">
    <location>
        <begin position="25"/>
        <end position="64"/>
    </location>
</feature>
<feature type="domain" description="C-type lectin" evidence="2">
    <location>
        <begin position="59"/>
        <end position="193"/>
    </location>
</feature>
<feature type="domain" description="EGF-like 2" evidence="3">
    <location>
        <begin position="180"/>
        <end position="219"/>
    </location>
</feature>
<feature type="domain" description="SUEL-type lectin" evidence="5">
    <location>
        <begin position="233"/>
        <end position="322"/>
    </location>
</feature>
<feature type="domain" description="GAIN-B" evidence="4">
    <location>
        <begin position="728"/>
        <end position="886"/>
    </location>
</feature>
<feature type="region of interest" description="GPS" evidence="4">
    <location>
        <begin position="841"/>
        <end position="886"/>
    </location>
</feature>
<feature type="region of interest" description="Disordered" evidence="6">
    <location>
        <begin position="1300"/>
        <end position="1338"/>
    </location>
</feature>
<feature type="site" description="Cleavage; by autolysis" evidence="4">
    <location>
        <begin position="873"/>
        <end position="874"/>
    </location>
</feature>
<feature type="disulfide bond" evidence="1">
    <location>
        <begin position="29"/>
        <end position="40"/>
    </location>
</feature>
<feature type="disulfide bond" evidence="1">
    <location>
        <begin position="52"/>
        <end position="63"/>
    </location>
</feature>
<feature type="disulfide bond" evidence="1">
    <location>
        <begin position="80"/>
        <end position="192"/>
    </location>
</feature>
<feature type="disulfide bond" evidence="1">
    <location>
        <begin position="167"/>
        <end position="184"/>
    </location>
</feature>
<feature type="disulfide bond" evidence="1">
    <location>
        <begin position="209"/>
        <end position="218"/>
    </location>
</feature>
<feature type="disulfide bond" evidence="4">
    <location>
        <begin position="841"/>
        <end position="868"/>
    </location>
</feature>
<feature type="disulfide bond" evidence="4">
    <location>
        <begin position="856"/>
        <end position="870"/>
    </location>
</feature>
<feature type="splice variant" id="VSP_046486" description="In isoform b." evidence="11">
    <location>
        <begin position="1"/>
        <end position="879"/>
    </location>
</feature>
<reference evidence="13" key="1">
    <citation type="submission" date="2003-09" db="EMBL/GenBank/DDBJ databases">
        <title>Molecular and evolutionary characterization of family B G-protein coupled receptors in Caenorhabditis elegans.</title>
        <authorList>
            <person name="Mastwal S.S."/>
            <person name="Yu D."/>
            <person name="Hedgecock E.M."/>
        </authorList>
    </citation>
    <scope>NUCLEOTIDE SEQUENCE [MRNA] (ISOFORM A)</scope>
</reference>
<reference evidence="12 14" key="2">
    <citation type="journal article" date="1998" name="Science">
        <title>Genome sequence of the nematode C. elegans: a platform for investigating biology.</title>
        <authorList>
            <consortium name="The C. elegans sequencing consortium"/>
        </authorList>
    </citation>
    <scope>NUCLEOTIDE SEQUENCE [LARGE SCALE GENOMIC DNA]</scope>
    <scope>ALTERNATIVE SPLICING</scope>
    <source>
        <strain evidence="14">Bristol N2</strain>
    </source>
</reference>
<reference evidence="12" key="3">
    <citation type="journal article" date="2007" name="Int. J. Parasitol.">
        <title>The calcium-activated potassium channel, SLO-1, is required for the action of the novel cyclo-octadepsipeptide anthelmintic, emodepside, in Caenorhabditis elegans.</title>
        <authorList>
            <person name="Guest M."/>
            <person name="Bull K."/>
            <person name="Walker R.J."/>
            <person name="Amliwala K."/>
            <person name="O'Connor V."/>
            <person name="Harder A."/>
            <person name="Holden-Dye L."/>
            <person name="Hopper N.A."/>
        </authorList>
    </citation>
    <scope>FUNCTION</scope>
    <scope>DISRUPTION PHENOTYPE</scope>
</reference>
<reference evidence="12" key="4">
    <citation type="journal article" date="2009" name="Dev. Cell">
        <title>Latrophilin signaling links anterior-posterior tissue polarity and oriented cell divisions in the C. elegans embryo.</title>
        <authorList>
            <person name="Langenhan T."/>
            <person name="Promel S."/>
            <person name="Mestek L."/>
            <person name="Esmaeili B."/>
            <person name="Waller-Evans H."/>
            <person name="Hennig C."/>
            <person name="Kohara Y."/>
            <person name="Avery L."/>
            <person name="Vakonakis I."/>
            <person name="Schnabel R."/>
            <person name="Russ A.P."/>
        </authorList>
    </citation>
    <scope>TISSUE SPECIFICITY</scope>
</reference>
<keyword id="KW-0025">Alternative splicing</keyword>
<keyword id="KW-1003">Cell membrane</keyword>
<keyword id="KW-1015">Disulfide bond</keyword>
<keyword id="KW-0245">EGF-like domain</keyword>
<keyword id="KW-0297">G-protein coupled receptor</keyword>
<keyword id="KW-0430">Lectin</keyword>
<keyword id="KW-0472">Membrane</keyword>
<keyword id="KW-0675">Receptor</keyword>
<keyword id="KW-1185">Reference proteome</keyword>
<keyword id="KW-0677">Repeat</keyword>
<keyword id="KW-0732">Signal</keyword>
<keyword id="KW-0807">Transducer</keyword>
<keyword id="KW-0812">Transmembrane</keyword>
<keyword id="KW-1133">Transmembrane helix</keyword>